<dbReference type="EMBL" id="AF005370">
    <property type="protein sequence ID" value="AAC58112.1"/>
    <property type="molecule type" value="Genomic_DNA"/>
</dbReference>
<dbReference type="PIR" id="T03160">
    <property type="entry name" value="T03160"/>
</dbReference>
<dbReference type="RefSeq" id="NP_065564.1">
    <property type="nucleotide sequence ID" value="NC_002531.1"/>
</dbReference>
<dbReference type="KEGG" id="vg:911803"/>
<dbReference type="Proteomes" id="UP000000941">
    <property type="component" value="Segment"/>
</dbReference>
<dbReference type="GO" id="GO:0042025">
    <property type="term" value="C:host cell nucleus"/>
    <property type="evidence" value="ECO:0007669"/>
    <property type="project" value="UniProtKB-SubCell"/>
</dbReference>
<dbReference type="GO" id="GO:0019028">
    <property type="term" value="C:viral capsid"/>
    <property type="evidence" value="ECO:0007669"/>
    <property type="project" value="UniProtKB-UniRule"/>
</dbReference>
<dbReference type="GO" id="GO:0016032">
    <property type="term" value="P:viral process"/>
    <property type="evidence" value="ECO:0007669"/>
    <property type="project" value="UniProtKB-UniRule"/>
</dbReference>
<dbReference type="HAMAP" id="MF_04022">
    <property type="entry name" value="HSV_SCP_gammahv"/>
    <property type="match status" value="1"/>
</dbReference>
<dbReference type="InterPro" id="IPR009299">
    <property type="entry name" value="Herpes_capsid"/>
</dbReference>
<dbReference type="Pfam" id="PF06112">
    <property type="entry name" value="Herpes_capsid"/>
    <property type="match status" value="1"/>
</dbReference>
<feature type="chain" id="PRO_0000405746" description="Small capsomere-interacting protein">
    <location>
        <begin position="1"/>
        <end position="252"/>
    </location>
</feature>
<feature type="region of interest" description="Disordered" evidence="2">
    <location>
        <begin position="69"/>
        <end position="252"/>
    </location>
</feature>
<feature type="compositionally biased region" description="Low complexity" evidence="2">
    <location>
        <begin position="83"/>
        <end position="93"/>
    </location>
</feature>
<feature type="compositionally biased region" description="Gly residues" evidence="2">
    <location>
        <begin position="94"/>
        <end position="109"/>
    </location>
</feature>
<feature type="compositionally biased region" description="Pro residues" evidence="2">
    <location>
        <begin position="182"/>
        <end position="192"/>
    </location>
</feature>
<feature type="compositionally biased region" description="Polar residues" evidence="2">
    <location>
        <begin position="213"/>
        <end position="237"/>
    </location>
</feature>
<name>SCP_ALHV1</name>
<reference key="1">
    <citation type="journal article" date="1997" name="J. Virol.">
        <title>Primary structure of the alcelaphine herpesvirus 1 genome.</title>
        <authorList>
            <person name="Ensser A."/>
            <person name="Pflanz R."/>
            <person name="Fleckenstein B."/>
        </authorList>
    </citation>
    <scope>NUCLEOTIDE SEQUENCE [LARGE SCALE GENOMIC DNA]</scope>
</reference>
<organismHost>
    <name type="scientific">Connochaetes taurinus</name>
    <name type="common">Blue wildebeest</name>
    <dbReference type="NCBI Taxonomy" id="9927"/>
</organismHost>
<protein>
    <recommendedName>
        <fullName evidence="1">Small capsomere-interacting protein</fullName>
    </recommendedName>
</protein>
<comment type="function">
    <text evidence="1">Participates in the assembly of the infectious particles by decorating the outer surface of the capsid shell and thus forming a layer between the capsid and the tegument. Complexes composed of the major capsid protein and small capsomere-interacting protein/SCP assemble together in the host cytoplasm and are translocated to the nucleus, where they accumulate and participate in capsid assembly.</text>
</comment>
<comment type="subunit">
    <text evidence="1">Interacts with the major capsid protein/MCP.</text>
</comment>
<comment type="subcellular location">
    <subcellularLocation>
        <location evidence="1">Virion</location>
    </subcellularLocation>
    <subcellularLocation>
        <location evidence="1">Host nucleus</location>
    </subcellularLocation>
</comment>
<comment type="similarity">
    <text evidence="1">Belongs to the herpesviridae small capsomere-interacting protein family.</text>
</comment>
<organism>
    <name type="scientific">Alcelaphine herpesvirus 1 (strain C500)</name>
    <name type="common">AlHV-1</name>
    <name type="synonym">Malignant catarrhal fever virus</name>
    <dbReference type="NCBI Taxonomy" id="654901"/>
    <lineage>
        <taxon>Viruses</taxon>
        <taxon>Duplodnaviria</taxon>
        <taxon>Heunggongvirae</taxon>
        <taxon>Peploviricota</taxon>
        <taxon>Herviviricetes</taxon>
        <taxon>Herpesvirales</taxon>
        <taxon>Orthoherpesviridae</taxon>
        <taxon>Gammaherpesvirinae</taxon>
        <taxon>Macavirus</taxon>
        <taxon>Macavirus alcelaphinegamma1</taxon>
    </lineage>
</organism>
<accession>O36415</accession>
<sequence length="252" mass="24554">MAHARPKLPRINLRLDAEYPNDPRVQQLHLQILNNPNYANNVRAPLSYLVFLTAQEMYEVFVRQARGVNKKRSGGPEKPILPANPGAGPQNAPGCGGGGSGSGGSGPPGGSAPQIQPPNNGVPSNQVSSNSGSAAGSGSGSGASSNSGAGSGAGAGSSACPSSGAGSGAGAGSSAGSNVQAPPAPPPLPQVPMVPGVVNGQEMYLPLGPVNGLPQQLGTAGSDNSGGQASSPGSQNPPTKPVAPRGKLGKGR</sequence>
<keyword id="KW-0167">Capsid protein</keyword>
<keyword id="KW-1048">Host nucleus</keyword>
<keyword id="KW-1185">Reference proteome</keyword>
<keyword id="KW-0946">Virion</keyword>
<proteinExistence type="inferred from homology"/>
<evidence type="ECO:0000255" key="1">
    <source>
        <dbReference type="HAMAP-Rule" id="MF_04022"/>
    </source>
</evidence>
<evidence type="ECO:0000256" key="2">
    <source>
        <dbReference type="SAM" id="MobiDB-lite"/>
    </source>
</evidence>
<gene>
    <name evidence="1" type="primary">SCP</name>
    <name type="ordered locus">65</name>
</gene>